<evidence type="ECO:0000255" key="1">
    <source>
        <dbReference type="HAMAP-Rule" id="MF_00607"/>
    </source>
</evidence>
<accession>A2C1Z5</accession>
<sequence length="291" mass="32571">MGGDNTLNDFRHIPRKRFGQHWLKDQGVLDQIVKAAELNPEDCVLEVGPGKGALTEKLIESQAKFIQAIELDRDLVIGLKKRFNHQNKFSLREGDILSAPLDAENGVTINKVVANIPYNITGPLLKRLIGELRKAPENSFETLVLLMQKEVAQRLLARPGNSNFSALSVRVQLLAKCQDVCDVPSKCFQPAPKVDSKVVMIKPFASIDPDFYEVGNLLEKLLKHAFAGRRKKLRNTIGSFVTSNDQIKEFFAYRGISLDQRPQEISPSNWFGLAKALKETCVIENGTFQSK</sequence>
<gene>
    <name evidence="1" type="primary">rsmA</name>
    <name evidence="1" type="synonym">ksgA</name>
    <name type="ordered locus">NATL1_09471</name>
</gene>
<keyword id="KW-0963">Cytoplasm</keyword>
<keyword id="KW-0489">Methyltransferase</keyword>
<keyword id="KW-0694">RNA-binding</keyword>
<keyword id="KW-0698">rRNA processing</keyword>
<keyword id="KW-0949">S-adenosyl-L-methionine</keyword>
<keyword id="KW-0808">Transferase</keyword>
<name>RSMA_PROM1</name>
<dbReference type="EC" id="2.1.1.182" evidence="1"/>
<dbReference type="EMBL" id="CP000553">
    <property type="protein sequence ID" value="ABM75505.1"/>
    <property type="molecule type" value="Genomic_DNA"/>
</dbReference>
<dbReference type="RefSeq" id="WP_011823639.1">
    <property type="nucleotide sequence ID" value="NC_008819.1"/>
</dbReference>
<dbReference type="SMR" id="A2C1Z5"/>
<dbReference type="KEGG" id="pme:NATL1_09471"/>
<dbReference type="eggNOG" id="COG0030">
    <property type="taxonomic scope" value="Bacteria"/>
</dbReference>
<dbReference type="HOGENOM" id="CLU_041220_0_1_3"/>
<dbReference type="Proteomes" id="UP000002592">
    <property type="component" value="Chromosome"/>
</dbReference>
<dbReference type="GO" id="GO:0005829">
    <property type="term" value="C:cytosol"/>
    <property type="evidence" value="ECO:0007669"/>
    <property type="project" value="TreeGrafter"/>
</dbReference>
<dbReference type="GO" id="GO:0052908">
    <property type="term" value="F:16S rRNA (adenine(1518)-N(6)/adenine(1519)-N(6))-dimethyltransferase activity"/>
    <property type="evidence" value="ECO:0007669"/>
    <property type="project" value="UniProtKB-EC"/>
</dbReference>
<dbReference type="GO" id="GO:0003723">
    <property type="term" value="F:RNA binding"/>
    <property type="evidence" value="ECO:0007669"/>
    <property type="project" value="UniProtKB-KW"/>
</dbReference>
<dbReference type="CDD" id="cd02440">
    <property type="entry name" value="AdoMet_MTases"/>
    <property type="match status" value="1"/>
</dbReference>
<dbReference type="Gene3D" id="1.10.8.100">
    <property type="entry name" value="Ribosomal RNA adenine dimethylase-like, domain 2"/>
    <property type="match status" value="1"/>
</dbReference>
<dbReference type="Gene3D" id="3.40.50.150">
    <property type="entry name" value="Vaccinia Virus protein VP39"/>
    <property type="match status" value="1"/>
</dbReference>
<dbReference type="HAMAP" id="MF_00607">
    <property type="entry name" value="16SrRNA_methyltr_A"/>
    <property type="match status" value="1"/>
</dbReference>
<dbReference type="InterPro" id="IPR001737">
    <property type="entry name" value="KsgA/Erm"/>
</dbReference>
<dbReference type="InterPro" id="IPR023165">
    <property type="entry name" value="rRNA_Ade_diMease-like_C"/>
</dbReference>
<dbReference type="InterPro" id="IPR020596">
    <property type="entry name" value="rRNA_Ade_Mease_Trfase_CS"/>
</dbReference>
<dbReference type="InterPro" id="IPR020598">
    <property type="entry name" value="rRNA_Ade_methylase_Trfase_N"/>
</dbReference>
<dbReference type="InterPro" id="IPR011530">
    <property type="entry name" value="rRNA_adenine_dimethylase"/>
</dbReference>
<dbReference type="InterPro" id="IPR029063">
    <property type="entry name" value="SAM-dependent_MTases_sf"/>
</dbReference>
<dbReference type="NCBIfam" id="TIGR00755">
    <property type="entry name" value="ksgA"/>
    <property type="match status" value="1"/>
</dbReference>
<dbReference type="PANTHER" id="PTHR11727">
    <property type="entry name" value="DIMETHYLADENOSINE TRANSFERASE"/>
    <property type="match status" value="1"/>
</dbReference>
<dbReference type="PANTHER" id="PTHR11727:SF7">
    <property type="entry name" value="DIMETHYLADENOSINE TRANSFERASE-RELATED"/>
    <property type="match status" value="1"/>
</dbReference>
<dbReference type="Pfam" id="PF00398">
    <property type="entry name" value="RrnaAD"/>
    <property type="match status" value="1"/>
</dbReference>
<dbReference type="SMART" id="SM00650">
    <property type="entry name" value="rADc"/>
    <property type="match status" value="1"/>
</dbReference>
<dbReference type="SUPFAM" id="SSF53335">
    <property type="entry name" value="S-adenosyl-L-methionine-dependent methyltransferases"/>
    <property type="match status" value="1"/>
</dbReference>
<dbReference type="PROSITE" id="PS01131">
    <property type="entry name" value="RRNA_A_DIMETH"/>
    <property type="match status" value="1"/>
</dbReference>
<dbReference type="PROSITE" id="PS51689">
    <property type="entry name" value="SAM_RNA_A_N6_MT"/>
    <property type="match status" value="1"/>
</dbReference>
<feature type="chain" id="PRO_1000056651" description="Ribosomal RNA small subunit methyltransferase A">
    <location>
        <begin position="1"/>
        <end position="291"/>
    </location>
</feature>
<feature type="binding site" evidence="1">
    <location>
        <position position="21"/>
    </location>
    <ligand>
        <name>S-adenosyl-L-methionine</name>
        <dbReference type="ChEBI" id="CHEBI:59789"/>
    </ligand>
</feature>
<feature type="binding site" evidence="1">
    <location>
        <position position="23"/>
    </location>
    <ligand>
        <name>S-adenosyl-L-methionine</name>
        <dbReference type="ChEBI" id="CHEBI:59789"/>
    </ligand>
</feature>
<feature type="binding site" evidence="1">
    <location>
        <position position="48"/>
    </location>
    <ligand>
        <name>S-adenosyl-L-methionine</name>
        <dbReference type="ChEBI" id="CHEBI:59789"/>
    </ligand>
</feature>
<feature type="binding site" evidence="1">
    <location>
        <position position="70"/>
    </location>
    <ligand>
        <name>S-adenosyl-L-methionine</name>
        <dbReference type="ChEBI" id="CHEBI:59789"/>
    </ligand>
</feature>
<feature type="binding site" evidence="1">
    <location>
        <position position="95"/>
    </location>
    <ligand>
        <name>S-adenosyl-L-methionine</name>
        <dbReference type="ChEBI" id="CHEBI:59789"/>
    </ligand>
</feature>
<feature type="binding site" evidence="1">
    <location>
        <position position="115"/>
    </location>
    <ligand>
        <name>S-adenosyl-L-methionine</name>
        <dbReference type="ChEBI" id="CHEBI:59789"/>
    </ligand>
</feature>
<protein>
    <recommendedName>
        <fullName evidence="1">Ribosomal RNA small subunit methyltransferase A</fullName>
        <ecNumber evidence="1">2.1.1.182</ecNumber>
    </recommendedName>
    <alternativeName>
        <fullName evidence="1">16S rRNA (adenine(1518)-N(6)/adenine(1519)-N(6))-dimethyltransferase</fullName>
    </alternativeName>
    <alternativeName>
        <fullName evidence="1">16S rRNA dimethyladenosine transferase</fullName>
    </alternativeName>
    <alternativeName>
        <fullName evidence="1">16S rRNA dimethylase</fullName>
    </alternativeName>
    <alternativeName>
        <fullName evidence="1">S-adenosylmethionine-6-N', N'-adenosyl(rRNA) dimethyltransferase</fullName>
    </alternativeName>
</protein>
<reference key="1">
    <citation type="journal article" date="2007" name="PLoS Genet.">
        <title>Patterns and implications of gene gain and loss in the evolution of Prochlorococcus.</title>
        <authorList>
            <person name="Kettler G.C."/>
            <person name="Martiny A.C."/>
            <person name="Huang K."/>
            <person name="Zucker J."/>
            <person name="Coleman M.L."/>
            <person name="Rodrigue S."/>
            <person name="Chen F."/>
            <person name="Lapidus A."/>
            <person name="Ferriera S."/>
            <person name="Johnson J."/>
            <person name="Steglich C."/>
            <person name="Church G.M."/>
            <person name="Richardson P."/>
            <person name="Chisholm S.W."/>
        </authorList>
    </citation>
    <scope>NUCLEOTIDE SEQUENCE [LARGE SCALE GENOMIC DNA]</scope>
    <source>
        <strain>NATL1A</strain>
    </source>
</reference>
<organism>
    <name type="scientific">Prochlorococcus marinus (strain NATL1A)</name>
    <dbReference type="NCBI Taxonomy" id="167555"/>
    <lineage>
        <taxon>Bacteria</taxon>
        <taxon>Bacillati</taxon>
        <taxon>Cyanobacteriota</taxon>
        <taxon>Cyanophyceae</taxon>
        <taxon>Synechococcales</taxon>
        <taxon>Prochlorococcaceae</taxon>
        <taxon>Prochlorococcus</taxon>
    </lineage>
</organism>
<proteinExistence type="inferred from homology"/>
<comment type="function">
    <text evidence="1">Specifically dimethylates two adjacent adenosines (A1518 and A1519) in the loop of a conserved hairpin near the 3'-end of 16S rRNA in the 30S particle. May play a critical role in biogenesis of 30S subunits.</text>
</comment>
<comment type="catalytic activity">
    <reaction evidence="1">
        <text>adenosine(1518)/adenosine(1519) in 16S rRNA + 4 S-adenosyl-L-methionine = N(6)-dimethyladenosine(1518)/N(6)-dimethyladenosine(1519) in 16S rRNA + 4 S-adenosyl-L-homocysteine + 4 H(+)</text>
        <dbReference type="Rhea" id="RHEA:19609"/>
        <dbReference type="Rhea" id="RHEA-COMP:10232"/>
        <dbReference type="Rhea" id="RHEA-COMP:10233"/>
        <dbReference type="ChEBI" id="CHEBI:15378"/>
        <dbReference type="ChEBI" id="CHEBI:57856"/>
        <dbReference type="ChEBI" id="CHEBI:59789"/>
        <dbReference type="ChEBI" id="CHEBI:74411"/>
        <dbReference type="ChEBI" id="CHEBI:74493"/>
        <dbReference type="EC" id="2.1.1.182"/>
    </reaction>
</comment>
<comment type="subcellular location">
    <subcellularLocation>
        <location evidence="1">Cytoplasm</location>
    </subcellularLocation>
</comment>
<comment type="similarity">
    <text evidence="1">Belongs to the class I-like SAM-binding methyltransferase superfamily. rRNA adenine N(6)-methyltransferase family. RsmA subfamily.</text>
</comment>